<evidence type="ECO:0000255" key="1">
    <source>
        <dbReference type="HAMAP-Rule" id="MF_01173"/>
    </source>
</evidence>
<sequence length="414" mass="44215">MEQPSPVTRQSFDEWIVPTYAPADFIVVRGEGSTLWDQQGKSYIDFAGGIAVNALGHGHPAVRAALIEQADKVWHLGNGYTNEPVLRLAKQLIDATFAEKVFFCNSGAEANEAALKLARKYALDNFANKAGQQGEKNQIVAFRNAFHGRTLFTVSAGGQPKYSQDFAPLPGGIHHGIFNDLASAEHLITDQTCAVIVEPIQGEGGVLPADKEFLHGLRALCDRHNALLIFDEIQTGVGRTGELYAYMHYGVSPDVLTSAKALGGGFPIGAMLTTTKYASALSVGSHGTTFGGNPLACAVAGTVLSLINQPTLLAGVKARHQWFIDELAEINARHNVFAEIRGRGLLIGCVLNAQYAGKSKEIVQAAAQYGLIALIAGPDVVRFAPSLIISPKEIKEGLARLAMGIEQVCQKVTS</sequence>
<proteinExistence type="inferred from homology"/>
<feature type="chain" id="PRO_1000164401" description="Succinylornithine transaminase">
    <location>
        <begin position="1"/>
        <end position="414"/>
    </location>
</feature>
<feature type="modified residue" description="N6-(pyridoxal phosphate)lysine" evidence="1">
    <location>
        <position position="260"/>
    </location>
</feature>
<name>ASTC_YERPG</name>
<organism>
    <name type="scientific">Yersinia pestis bv. Antiqua (strain Angola)</name>
    <dbReference type="NCBI Taxonomy" id="349746"/>
    <lineage>
        <taxon>Bacteria</taxon>
        <taxon>Pseudomonadati</taxon>
        <taxon>Pseudomonadota</taxon>
        <taxon>Gammaproteobacteria</taxon>
        <taxon>Enterobacterales</taxon>
        <taxon>Yersiniaceae</taxon>
        <taxon>Yersinia</taxon>
    </lineage>
</organism>
<protein>
    <recommendedName>
        <fullName evidence="1">Succinylornithine transaminase</fullName>
        <ecNumber evidence="1">2.6.1.81</ecNumber>
    </recommendedName>
    <alternativeName>
        <fullName evidence="1">Succinylornithine aminotransferase</fullName>
    </alternativeName>
</protein>
<dbReference type="EC" id="2.6.1.81" evidence="1"/>
<dbReference type="EMBL" id="CP000901">
    <property type="protein sequence ID" value="ABX85545.1"/>
    <property type="molecule type" value="Genomic_DNA"/>
</dbReference>
<dbReference type="RefSeq" id="WP_002216140.1">
    <property type="nucleotide sequence ID" value="NZ_CP009935.1"/>
</dbReference>
<dbReference type="SMR" id="A9QZ63"/>
<dbReference type="KEGG" id="ypg:YpAngola_A2520"/>
<dbReference type="PATRIC" id="fig|349746.12.peg.3539"/>
<dbReference type="UniPathway" id="UPA00185">
    <property type="reaction ID" value="UER00281"/>
</dbReference>
<dbReference type="GO" id="GO:0042802">
    <property type="term" value="F:identical protein binding"/>
    <property type="evidence" value="ECO:0007669"/>
    <property type="project" value="TreeGrafter"/>
</dbReference>
<dbReference type="GO" id="GO:0030170">
    <property type="term" value="F:pyridoxal phosphate binding"/>
    <property type="evidence" value="ECO:0007669"/>
    <property type="project" value="UniProtKB-UniRule"/>
</dbReference>
<dbReference type="GO" id="GO:0043825">
    <property type="term" value="F:succinylornithine transaminase activity"/>
    <property type="evidence" value="ECO:0007669"/>
    <property type="project" value="UniProtKB-EC"/>
</dbReference>
<dbReference type="GO" id="GO:1901607">
    <property type="term" value="P:alpha-amino acid biosynthetic process"/>
    <property type="evidence" value="ECO:0007669"/>
    <property type="project" value="UniProtKB-ARBA"/>
</dbReference>
<dbReference type="GO" id="GO:0019544">
    <property type="term" value="P:arginine catabolic process to glutamate"/>
    <property type="evidence" value="ECO:0007669"/>
    <property type="project" value="UniProtKB-UniRule"/>
</dbReference>
<dbReference type="GO" id="GO:0019545">
    <property type="term" value="P:arginine catabolic process to succinate"/>
    <property type="evidence" value="ECO:0007669"/>
    <property type="project" value="UniProtKB-UniRule"/>
</dbReference>
<dbReference type="GO" id="GO:0006593">
    <property type="term" value="P:ornithine catabolic process"/>
    <property type="evidence" value="ECO:0007669"/>
    <property type="project" value="InterPro"/>
</dbReference>
<dbReference type="CDD" id="cd00610">
    <property type="entry name" value="OAT_like"/>
    <property type="match status" value="1"/>
</dbReference>
<dbReference type="FunFam" id="3.40.640.10:FF:000004">
    <property type="entry name" value="Acetylornithine aminotransferase"/>
    <property type="match status" value="1"/>
</dbReference>
<dbReference type="Gene3D" id="3.90.1150.10">
    <property type="entry name" value="Aspartate Aminotransferase, domain 1"/>
    <property type="match status" value="1"/>
</dbReference>
<dbReference type="Gene3D" id="3.40.640.10">
    <property type="entry name" value="Type I PLP-dependent aspartate aminotransferase-like (Major domain)"/>
    <property type="match status" value="1"/>
</dbReference>
<dbReference type="HAMAP" id="MF_01107">
    <property type="entry name" value="ArgD_aminotrans_3"/>
    <property type="match status" value="1"/>
</dbReference>
<dbReference type="HAMAP" id="MF_01173">
    <property type="entry name" value="AstC_aminotrans_3"/>
    <property type="match status" value="1"/>
</dbReference>
<dbReference type="InterPro" id="IPR017652">
    <property type="entry name" value="Ac/SucOrn_transaminase_bac"/>
</dbReference>
<dbReference type="InterPro" id="IPR004636">
    <property type="entry name" value="AcOrn/SuccOrn_fam"/>
</dbReference>
<dbReference type="InterPro" id="IPR005814">
    <property type="entry name" value="Aminotrans_3"/>
</dbReference>
<dbReference type="InterPro" id="IPR049704">
    <property type="entry name" value="Aminotrans_3_PPA_site"/>
</dbReference>
<dbReference type="InterPro" id="IPR050103">
    <property type="entry name" value="Class-III_PLP-dep_AT"/>
</dbReference>
<dbReference type="InterPro" id="IPR015424">
    <property type="entry name" value="PyrdxlP-dep_Trfase"/>
</dbReference>
<dbReference type="InterPro" id="IPR015421">
    <property type="entry name" value="PyrdxlP-dep_Trfase_major"/>
</dbReference>
<dbReference type="InterPro" id="IPR015422">
    <property type="entry name" value="PyrdxlP-dep_Trfase_small"/>
</dbReference>
<dbReference type="InterPro" id="IPR026330">
    <property type="entry name" value="SOAT"/>
</dbReference>
<dbReference type="NCBIfam" id="TIGR03246">
    <property type="entry name" value="arg_catab_astC"/>
    <property type="match status" value="1"/>
</dbReference>
<dbReference type="NCBIfam" id="TIGR00707">
    <property type="entry name" value="argD"/>
    <property type="match status" value="1"/>
</dbReference>
<dbReference type="NCBIfam" id="NF002325">
    <property type="entry name" value="PRK01278.1"/>
    <property type="match status" value="1"/>
</dbReference>
<dbReference type="NCBIfam" id="NF003468">
    <property type="entry name" value="PRK05093.1"/>
    <property type="match status" value="1"/>
</dbReference>
<dbReference type="NCBIfam" id="NF009047">
    <property type="entry name" value="PRK12381.1"/>
    <property type="match status" value="1"/>
</dbReference>
<dbReference type="PANTHER" id="PTHR11986">
    <property type="entry name" value="AMINOTRANSFERASE CLASS III"/>
    <property type="match status" value="1"/>
</dbReference>
<dbReference type="PANTHER" id="PTHR11986:SF113">
    <property type="entry name" value="SUCCINYLORNITHINE TRANSAMINASE"/>
    <property type="match status" value="1"/>
</dbReference>
<dbReference type="Pfam" id="PF00202">
    <property type="entry name" value="Aminotran_3"/>
    <property type="match status" value="1"/>
</dbReference>
<dbReference type="PIRSF" id="PIRSF000521">
    <property type="entry name" value="Transaminase_4ab_Lys_Orn"/>
    <property type="match status" value="1"/>
</dbReference>
<dbReference type="SUPFAM" id="SSF53383">
    <property type="entry name" value="PLP-dependent transferases"/>
    <property type="match status" value="1"/>
</dbReference>
<dbReference type="PROSITE" id="PS00600">
    <property type="entry name" value="AA_TRANSFER_CLASS_3"/>
    <property type="match status" value="1"/>
</dbReference>
<accession>A9QZ63</accession>
<reference key="1">
    <citation type="journal article" date="2010" name="J. Bacteriol.">
        <title>Genome sequence of the deep-rooted Yersinia pestis strain Angola reveals new insights into the evolution and pangenome of the plague bacterium.</title>
        <authorList>
            <person name="Eppinger M."/>
            <person name="Worsham P.L."/>
            <person name="Nikolich M.P."/>
            <person name="Riley D.R."/>
            <person name="Sebastian Y."/>
            <person name="Mou S."/>
            <person name="Achtman M."/>
            <person name="Lindler L.E."/>
            <person name="Ravel J."/>
        </authorList>
    </citation>
    <scope>NUCLEOTIDE SEQUENCE [LARGE SCALE GENOMIC DNA]</scope>
    <source>
        <strain>Angola</strain>
    </source>
</reference>
<comment type="function">
    <text evidence="1">Catalyzes the transamination of N(2)-succinylornithine and alpha-ketoglutarate into N(2)-succinylglutamate semialdehyde and glutamate. Can also act as an acetylornithine aminotransferase.</text>
</comment>
<comment type="catalytic activity">
    <reaction evidence="1">
        <text>N(2)-succinyl-L-ornithine + 2-oxoglutarate = N-succinyl-L-glutamate 5-semialdehyde + L-glutamate</text>
        <dbReference type="Rhea" id="RHEA:16953"/>
        <dbReference type="ChEBI" id="CHEBI:16810"/>
        <dbReference type="ChEBI" id="CHEBI:29985"/>
        <dbReference type="ChEBI" id="CHEBI:58514"/>
        <dbReference type="ChEBI" id="CHEBI:58520"/>
        <dbReference type="EC" id="2.6.1.81"/>
    </reaction>
</comment>
<comment type="cofactor">
    <cofactor evidence="1">
        <name>pyridoxal 5'-phosphate</name>
        <dbReference type="ChEBI" id="CHEBI:597326"/>
    </cofactor>
</comment>
<comment type="pathway">
    <text evidence="1">Amino-acid degradation; L-arginine degradation via AST pathway; L-glutamate and succinate from L-arginine: step 3/5.</text>
</comment>
<comment type="similarity">
    <text evidence="1">Belongs to the class-III pyridoxal-phosphate-dependent aminotransferase family. AstC subfamily.</text>
</comment>
<gene>
    <name evidence="1" type="primary">astC</name>
    <name evidence="1" type="synonym">argM</name>
    <name type="ordered locus">YpAngola_A2520</name>
</gene>
<keyword id="KW-0032">Aminotransferase</keyword>
<keyword id="KW-0056">Arginine metabolism</keyword>
<keyword id="KW-0663">Pyridoxal phosphate</keyword>
<keyword id="KW-0808">Transferase</keyword>